<comment type="function">
    <text evidence="1">Catalyzes the specific phosphorylation of 1,6-anhydro-N-acetylmuramic acid (anhMurNAc) with the simultaneous cleavage of the 1,6-anhydro ring, generating MurNAc-6-P. Is required for the utilization of anhMurNAc either imported from the medium or derived from its own cell wall murein, and thus plays a role in cell wall recycling.</text>
</comment>
<comment type="catalytic activity">
    <reaction evidence="1">
        <text>1,6-anhydro-N-acetyl-beta-muramate + ATP + H2O = N-acetyl-D-muramate 6-phosphate + ADP + H(+)</text>
        <dbReference type="Rhea" id="RHEA:24952"/>
        <dbReference type="ChEBI" id="CHEBI:15377"/>
        <dbReference type="ChEBI" id="CHEBI:15378"/>
        <dbReference type="ChEBI" id="CHEBI:30616"/>
        <dbReference type="ChEBI" id="CHEBI:58690"/>
        <dbReference type="ChEBI" id="CHEBI:58722"/>
        <dbReference type="ChEBI" id="CHEBI:456216"/>
        <dbReference type="EC" id="2.7.1.170"/>
    </reaction>
</comment>
<comment type="pathway">
    <text evidence="1">Amino-sugar metabolism; 1,6-anhydro-N-acetylmuramate degradation.</text>
</comment>
<comment type="pathway">
    <text evidence="1">Cell wall biogenesis; peptidoglycan recycling.</text>
</comment>
<comment type="similarity">
    <text evidence="1">Belongs to the anhydro-N-acetylmuramic acid kinase family.</text>
</comment>
<dbReference type="EC" id="2.7.1.170" evidence="1"/>
<dbReference type="EMBL" id="AP009552">
    <property type="protein sequence ID" value="BAG04085.1"/>
    <property type="molecule type" value="Genomic_DNA"/>
</dbReference>
<dbReference type="RefSeq" id="WP_012266927.1">
    <property type="nucleotide sequence ID" value="NC_010296.1"/>
</dbReference>
<dbReference type="SMR" id="B0JSC7"/>
<dbReference type="STRING" id="449447.MAE_42630"/>
<dbReference type="PaxDb" id="449447-MAE_42630"/>
<dbReference type="EnsemblBacteria" id="BAG04085">
    <property type="protein sequence ID" value="BAG04085"/>
    <property type="gene ID" value="MAE_42630"/>
</dbReference>
<dbReference type="KEGG" id="mar:MAE_42630"/>
<dbReference type="PATRIC" id="fig|449447.4.peg.3870"/>
<dbReference type="eggNOG" id="COG2377">
    <property type="taxonomic scope" value="Bacteria"/>
</dbReference>
<dbReference type="HOGENOM" id="CLU_038782_1_0_3"/>
<dbReference type="BioCyc" id="MAER449447:MAE_RS18495-MONOMER"/>
<dbReference type="UniPathway" id="UPA00343"/>
<dbReference type="UniPathway" id="UPA00544"/>
<dbReference type="Proteomes" id="UP000001510">
    <property type="component" value="Chromosome"/>
</dbReference>
<dbReference type="GO" id="GO:0005524">
    <property type="term" value="F:ATP binding"/>
    <property type="evidence" value="ECO:0007669"/>
    <property type="project" value="UniProtKB-UniRule"/>
</dbReference>
<dbReference type="GO" id="GO:0016301">
    <property type="term" value="F:kinase activity"/>
    <property type="evidence" value="ECO:0007669"/>
    <property type="project" value="UniProtKB-KW"/>
</dbReference>
<dbReference type="GO" id="GO:0016773">
    <property type="term" value="F:phosphotransferase activity, alcohol group as acceptor"/>
    <property type="evidence" value="ECO:0007669"/>
    <property type="project" value="UniProtKB-UniRule"/>
</dbReference>
<dbReference type="GO" id="GO:0097175">
    <property type="term" value="P:1,6-anhydro-N-acetyl-beta-muramic acid catabolic process"/>
    <property type="evidence" value="ECO:0007669"/>
    <property type="project" value="UniProtKB-UniRule"/>
</dbReference>
<dbReference type="GO" id="GO:0006040">
    <property type="term" value="P:amino sugar metabolic process"/>
    <property type="evidence" value="ECO:0007669"/>
    <property type="project" value="InterPro"/>
</dbReference>
<dbReference type="GO" id="GO:0009254">
    <property type="term" value="P:peptidoglycan turnover"/>
    <property type="evidence" value="ECO:0007669"/>
    <property type="project" value="UniProtKB-UniRule"/>
</dbReference>
<dbReference type="CDD" id="cd24050">
    <property type="entry name" value="ASKHA_NBD_ANMK"/>
    <property type="match status" value="1"/>
</dbReference>
<dbReference type="Gene3D" id="3.30.420.40">
    <property type="match status" value="2"/>
</dbReference>
<dbReference type="HAMAP" id="MF_01270">
    <property type="entry name" value="AnhMurNAc_kinase"/>
    <property type="match status" value="1"/>
</dbReference>
<dbReference type="InterPro" id="IPR005338">
    <property type="entry name" value="Anhydro_N_Ac-Mur_kinase"/>
</dbReference>
<dbReference type="InterPro" id="IPR043129">
    <property type="entry name" value="ATPase_NBD"/>
</dbReference>
<dbReference type="NCBIfam" id="NF007143">
    <property type="entry name" value="PRK09585.2-2"/>
    <property type="match status" value="1"/>
</dbReference>
<dbReference type="NCBIfam" id="NF007148">
    <property type="entry name" value="PRK09585.3-2"/>
    <property type="match status" value="1"/>
</dbReference>
<dbReference type="PANTHER" id="PTHR30605">
    <property type="entry name" value="ANHYDRO-N-ACETYLMURAMIC ACID KINASE"/>
    <property type="match status" value="1"/>
</dbReference>
<dbReference type="PANTHER" id="PTHR30605:SF0">
    <property type="entry name" value="ANHYDRO-N-ACETYLMURAMIC ACID KINASE"/>
    <property type="match status" value="1"/>
</dbReference>
<dbReference type="Pfam" id="PF03702">
    <property type="entry name" value="AnmK"/>
    <property type="match status" value="1"/>
</dbReference>
<dbReference type="SUPFAM" id="SSF53067">
    <property type="entry name" value="Actin-like ATPase domain"/>
    <property type="match status" value="1"/>
</dbReference>
<organism>
    <name type="scientific">Microcystis aeruginosa (strain NIES-843 / IAM M-2473)</name>
    <dbReference type="NCBI Taxonomy" id="449447"/>
    <lineage>
        <taxon>Bacteria</taxon>
        <taxon>Bacillati</taxon>
        <taxon>Cyanobacteriota</taxon>
        <taxon>Cyanophyceae</taxon>
        <taxon>Oscillatoriophycideae</taxon>
        <taxon>Chroococcales</taxon>
        <taxon>Microcystaceae</taxon>
        <taxon>Microcystis</taxon>
    </lineage>
</organism>
<accession>B0JSC7</accession>
<reference key="1">
    <citation type="journal article" date="2007" name="DNA Res.">
        <title>Complete genomic structure of the bloom-forming toxic cyanobacterium Microcystis aeruginosa NIES-843.</title>
        <authorList>
            <person name="Kaneko T."/>
            <person name="Nakajima N."/>
            <person name="Okamoto S."/>
            <person name="Suzuki I."/>
            <person name="Tanabe Y."/>
            <person name="Tamaoki M."/>
            <person name="Nakamura Y."/>
            <person name="Kasai F."/>
            <person name="Watanabe A."/>
            <person name="Kawashima K."/>
            <person name="Kishida Y."/>
            <person name="Ono A."/>
            <person name="Shimizu Y."/>
            <person name="Takahashi C."/>
            <person name="Minami C."/>
            <person name="Fujishiro T."/>
            <person name="Kohara M."/>
            <person name="Katoh M."/>
            <person name="Nakazaki N."/>
            <person name="Nakayama S."/>
            <person name="Yamada M."/>
            <person name="Tabata S."/>
            <person name="Watanabe M.M."/>
        </authorList>
    </citation>
    <scope>NUCLEOTIDE SEQUENCE [LARGE SCALE GENOMIC DNA]</scope>
    <source>
        <strain>NIES-843 / IAM M-247</strain>
    </source>
</reference>
<proteinExistence type="inferred from homology"/>
<evidence type="ECO:0000255" key="1">
    <source>
        <dbReference type="HAMAP-Rule" id="MF_01270"/>
    </source>
</evidence>
<protein>
    <recommendedName>
        <fullName evidence="1">Anhydro-N-acetylmuramic acid kinase</fullName>
        <ecNumber evidence="1">2.7.1.170</ecNumber>
    </recommendedName>
    <alternativeName>
        <fullName evidence="1">AnhMurNAc kinase</fullName>
    </alternativeName>
</protein>
<name>ANMK_MICAN</name>
<gene>
    <name evidence="1" type="primary">anmK</name>
    <name type="ordered locus">MAE_42630</name>
</gene>
<sequence length="378" mass="41291">MLVIGLMSGTSVDGIDTALVEISGTVESPQVQLLAGETYPYSPRLRETILQVCGGEKLSIEALASLDDNIAAEFAQAALNIQKEAPKAQLIGSHGQTVFHRPPANDRLGYTVQLGRGAAIAKITRIPTISNFRAADIAQAGHGAPLVPKIDAYLLSHPTKTRCVQNIGGIGNLTYLPPRQRENWQQKIFGWDTGPGNVLIDLAVQFLSQGQQTYDHNGQWSAQGQPCSELVHKWLQEPYFQQYPPKSTGRELFSPAYLAQLREDAQAYCLSDADWLASLTDLTAISIAHSYQTFLPEMPAEVLLCGGGARNAYLRQRLLAHLGSNVKLLTTDEVGLNSDFKEAIAFALLAYWRWHNFPGNLPQVTGAKAAVLLGEIYR</sequence>
<feature type="chain" id="PRO_1000214168" description="Anhydro-N-acetylmuramic acid kinase">
    <location>
        <begin position="1"/>
        <end position="378"/>
    </location>
</feature>
<feature type="binding site" evidence="1">
    <location>
        <begin position="9"/>
        <end position="16"/>
    </location>
    <ligand>
        <name>ATP</name>
        <dbReference type="ChEBI" id="CHEBI:30616"/>
    </ligand>
</feature>
<keyword id="KW-0067">ATP-binding</keyword>
<keyword id="KW-0119">Carbohydrate metabolism</keyword>
<keyword id="KW-0418">Kinase</keyword>
<keyword id="KW-0547">Nucleotide-binding</keyword>
<keyword id="KW-0808">Transferase</keyword>